<name>FLA14_ARATH</name>
<dbReference type="EMBL" id="AB024033">
    <property type="protein sequence ID" value="BAB02409.1"/>
    <property type="molecule type" value="Genomic_DNA"/>
</dbReference>
<dbReference type="EMBL" id="AC069474">
    <property type="protein sequence ID" value="AAG51033.1"/>
    <property type="molecule type" value="Genomic_DNA"/>
</dbReference>
<dbReference type="EMBL" id="CP002686">
    <property type="protein sequence ID" value="AEE75229.1"/>
    <property type="molecule type" value="Genomic_DNA"/>
</dbReference>
<dbReference type="EMBL" id="DQ446657">
    <property type="protein sequence ID" value="ABE65936.1"/>
    <property type="molecule type" value="mRNA"/>
</dbReference>
<dbReference type="RefSeq" id="NP_187872.1">
    <property type="nucleotide sequence ID" value="NM_112101.1"/>
</dbReference>
<dbReference type="SMR" id="Q9LTW9"/>
<dbReference type="BioGRID" id="5780">
    <property type="interactions" value="1"/>
</dbReference>
<dbReference type="FunCoup" id="Q9LTW9">
    <property type="interactions" value="57"/>
</dbReference>
<dbReference type="STRING" id="3702.Q9LTW9"/>
<dbReference type="GlyCosmos" id="Q9LTW9">
    <property type="glycosylation" value="4 sites, No reported glycans"/>
</dbReference>
<dbReference type="GlyGen" id="Q9LTW9">
    <property type="glycosylation" value="4 sites"/>
</dbReference>
<dbReference type="PaxDb" id="3702-AT3G12660.1"/>
<dbReference type="ProteomicsDB" id="230587"/>
<dbReference type="EnsemblPlants" id="AT3G12660.1">
    <property type="protein sequence ID" value="AT3G12660.1"/>
    <property type="gene ID" value="AT3G12660"/>
</dbReference>
<dbReference type="GeneID" id="820446"/>
<dbReference type="Gramene" id="AT3G12660.1">
    <property type="protein sequence ID" value="AT3G12660.1"/>
    <property type="gene ID" value="AT3G12660"/>
</dbReference>
<dbReference type="KEGG" id="ath:AT3G12660"/>
<dbReference type="Araport" id="AT3G12660"/>
<dbReference type="TAIR" id="AT3G12660">
    <property type="gene designation" value="FLA14"/>
</dbReference>
<dbReference type="eggNOG" id="ENOG502S0N4">
    <property type="taxonomic scope" value="Eukaryota"/>
</dbReference>
<dbReference type="HOGENOM" id="CLU_058119_0_0_1"/>
<dbReference type="InParanoid" id="Q9LTW9"/>
<dbReference type="OMA" id="LNEHDDF"/>
<dbReference type="OrthoDB" id="694090at2759"/>
<dbReference type="PhylomeDB" id="Q9LTW9"/>
<dbReference type="PRO" id="PR:Q9LTW9"/>
<dbReference type="Proteomes" id="UP000006548">
    <property type="component" value="Chromosome 3"/>
</dbReference>
<dbReference type="ExpressionAtlas" id="Q9LTW9">
    <property type="expression patterns" value="baseline and differential"/>
</dbReference>
<dbReference type="GO" id="GO:0005886">
    <property type="term" value="C:plasma membrane"/>
    <property type="evidence" value="ECO:0007669"/>
    <property type="project" value="UniProtKB-SubCell"/>
</dbReference>
<dbReference type="GO" id="GO:0098552">
    <property type="term" value="C:side of membrane"/>
    <property type="evidence" value="ECO:0007669"/>
    <property type="project" value="UniProtKB-KW"/>
</dbReference>
<dbReference type="FunFam" id="2.30.180.10:FF:000015">
    <property type="entry name" value="Fasciclin-like arabinogalactan protein 3"/>
    <property type="match status" value="1"/>
</dbReference>
<dbReference type="Gene3D" id="2.30.180.10">
    <property type="entry name" value="FAS1 domain"/>
    <property type="match status" value="1"/>
</dbReference>
<dbReference type="InterPro" id="IPR036378">
    <property type="entry name" value="FAS1_dom_sf"/>
</dbReference>
<dbReference type="InterPro" id="IPR000782">
    <property type="entry name" value="FAS1_domain"/>
</dbReference>
<dbReference type="InterPro" id="IPR033254">
    <property type="entry name" value="Plant_FLA"/>
</dbReference>
<dbReference type="PANTHER" id="PTHR32382">
    <property type="entry name" value="FASCICLIN-LIKE ARABINOGALACTAN PROTEIN"/>
    <property type="match status" value="1"/>
</dbReference>
<dbReference type="PANTHER" id="PTHR32382:SF6">
    <property type="entry name" value="FASCICLIN-LIKE ARABINOGALACTAN PROTEIN 14"/>
    <property type="match status" value="1"/>
</dbReference>
<dbReference type="Pfam" id="PF02469">
    <property type="entry name" value="Fasciclin"/>
    <property type="match status" value="1"/>
</dbReference>
<dbReference type="SUPFAM" id="SSF82153">
    <property type="entry name" value="FAS1 domain"/>
    <property type="match status" value="1"/>
</dbReference>
<dbReference type="PROSITE" id="PS50213">
    <property type="entry name" value="FAS1"/>
    <property type="match status" value="1"/>
</dbReference>
<accession>Q9LTW9</accession>
<feature type="signal peptide" evidence="1">
    <location>
        <begin position="1"/>
        <end position="23"/>
    </location>
</feature>
<feature type="chain" id="PRO_0000253873" description="Fasciclin-like arabinogalactan protein 14">
    <location>
        <begin position="24"/>
        <end position="225"/>
    </location>
</feature>
<feature type="propeptide" id="PRO_0000253874" description="Removed in mature form" evidence="1">
    <location>
        <begin position="226"/>
        <end position="255"/>
    </location>
</feature>
<feature type="domain" description="FAS1" evidence="2">
    <location>
        <begin position="24"/>
        <end position="169"/>
    </location>
</feature>
<feature type="region of interest" description="Disordered" evidence="3">
    <location>
        <begin position="179"/>
        <end position="231"/>
    </location>
</feature>
<feature type="compositionally biased region" description="Acidic residues" evidence="3">
    <location>
        <begin position="197"/>
        <end position="206"/>
    </location>
</feature>
<feature type="compositionally biased region" description="Polar residues" evidence="3">
    <location>
        <begin position="222"/>
        <end position="231"/>
    </location>
</feature>
<feature type="lipid moiety-binding region" description="GPI-anchor amidated serine" evidence="1">
    <location>
        <position position="225"/>
    </location>
</feature>
<feature type="glycosylation site" description="N-linked (GlcNAc...) asparagine" evidence="1">
    <location>
        <position position="25"/>
    </location>
</feature>
<feature type="glycosylation site" description="N-linked (GlcNAc...) asparagine" evidence="1">
    <location>
        <position position="99"/>
    </location>
</feature>
<feature type="glycosylation site" description="N-linked (GlcNAc...) asparagine" evidence="1">
    <location>
        <position position="125"/>
    </location>
</feature>
<feature type="glycosylation site" description="N-linked (GlcNAc...) asparagine" evidence="1">
    <location>
        <position position="159"/>
    </location>
</feature>
<organism>
    <name type="scientific">Arabidopsis thaliana</name>
    <name type="common">Mouse-ear cress</name>
    <dbReference type="NCBI Taxonomy" id="3702"/>
    <lineage>
        <taxon>Eukaryota</taxon>
        <taxon>Viridiplantae</taxon>
        <taxon>Streptophyta</taxon>
        <taxon>Embryophyta</taxon>
        <taxon>Tracheophyta</taxon>
        <taxon>Spermatophyta</taxon>
        <taxon>Magnoliopsida</taxon>
        <taxon>eudicotyledons</taxon>
        <taxon>Gunneridae</taxon>
        <taxon>Pentapetalae</taxon>
        <taxon>rosids</taxon>
        <taxon>malvids</taxon>
        <taxon>Brassicales</taxon>
        <taxon>Brassicaceae</taxon>
        <taxon>Camelineae</taxon>
        <taxon>Arabidopsis</taxon>
    </lineage>
</organism>
<reference key="1">
    <citation type="journal article" date="2000" name="DNA Res.">
        <title>Structural analysis of Arabidopsis thaliana chromosome 3. I. Sequence features of the regions of 4,504,864 bp covered by sixty P1 and TAC clones.</title>
        <authorList>
            <person name="Sato S."/>
            <person name="Nakamura Y."/>
            <person name="Kaneko T."/>
            <person name="Katoh T."/>
            <person name="Asamizu E."/>
            <person name="Tabata S."/>
        </authorList>
    </citation>
    <scope>NUCLEOTIDE SEQUENCE [LARGE SCALE GENOMIC DNA]</scope>
    <source>
        <strain>cv. Columbia</strain>
    </source>
</reference>
<reference key="2">
    <citation type="journal article" date="2000" name="Nature">
        <title>Sequence and analysis of chromosome 3 of the plant Arabidopsis thaliana.</title>
        <authorList>
            <person name="Salanoubat M."/>
            <person name="Lemcke K."/>
            <person name="Rieger M."/>
            <person name="Ansorge W."/>
            <person name="Unseld M."/>
            <person name="Fartmann B."/>
            <person name="Valle G."/>
            <person name="Bloecker H."/>
            <person name="Perez-Alonso M."/>
            <person name="Obermaier B."/>
            <person name="Delseny M."/>
            <person name="Boutry M."/>
            <person name="Grivell L.A."/>
            <person name="Mache R."/>
            <person name="Puigdomenech P."/>
            <person name="De Simone V."/>
            <person name="Choisne N."/>
            <person name="Artiguenave F."/>
            <person name="Robert C."/>
            <person name="Brottier P."/>
            <person name="Wincker P."/>
            <person name="Cattolico L."/>
            <person name="Weissenbach J."/>
            <person name="Saurin W."/>
            <person name="Quetier F."/>
            <person name="Schaefer M."/>
            <person name="Mueller-Auer S."/>
            <person name="Gabel C."/>
            <person name="Fuchs M."/>
            <person name="Benes V."/>
            <person name="Wurmbach E."/>
            <person name="Drzonek H."/>
            <person name="Erfle H."/>
            <person name="Jordan N."/>
            <person name="Bangert S."/>
            <person name="Wiedelmann R."/>
            <person name="Kranz H."/>
            <person name="Voss H."/>
            <person name="Holland R."/>
            <person name="Brandt P."/>
            <person name="Nyakatura G."/>
            <person name="Vezzi A."/>
            <person name="D'Angelo M."/>
            <person name="Pallavicini A."/>
            <person name="Toppo S."/>
            <person name="Simionati B."/>
            <person name="Conrad A."/>
            <person name="Hornischer K."/>
            <person name="Kauer G."/>
            <person name="Loehnert T.-H."/>
            <person name="Nordsiek G."/>
            <person name="Reichelt J."/>
            <person name="Scharfe M."/>
            <person name="Schoen O."/>
            <person name="Bargues M."/>
            <person name="Terol J."/>
            <person name="Climent J."/>
            <person name="Navarro P."/>
            <person name="Collado C."/>
            <person name="Perez-Perez A."/>
            <person name="Ottenwaelder B."/>
            <person name="Duchemin D."/>
            <person name="Cooke R."/>
            <person name="Laudie M."/>
            <person name="Berger-Llauro C."/>
            <person name="Purnelle B."/>
            <person name="Masuy D."/>
            <person name="de Haan M."/>
            <person name="Maarse A.C."/>
            <person name="Alcaraz J.-P."/>
            <person name="Cottet A."/>
            <person name="Casacuberta E."/>
            <person name="Monfort A."/>
            <person name="Argiriou A."/>
            <person name="Flores M."/>
            <person name="Liguori R."/>
            <person name="Vitale D."/>
            <person name="Mannhaupt G."/>
            <person name="Haase D."/>
            <person name="Schoof H."/>
            <person name="Rudd S."/>
            <person name="Zaccaria P."/>
            <person name="Mewes H.-W."/>
            <person name="Mayer K.F.X."/>
            <person name="Kaul S."/>
            <person name="Town C.D."/>
            <person name="Koo H.L."/>
            <person name="Tallon L.J."/>
            <person name="Jenkins J."/>
            <person name="Rooney T."/>
            <person name="Rizzo M."/>
            <person name="Walts A."/>
            <person name="Utterback T."/>
            <person name="Fujii C.Y."/>
            <person name="Shea T.P."/>
            <person name="Creasy T.H."/>
            <person name="Haas B."/>
            <person name="Maiti R."/>
            <person name="Wu D."/>
            <person name="Peterson J."/>
            <person name="Van Aken S."/>
            <person name="Pai G."/>
            <person name="Militscher J."/>
            <person name="Sellers P."/>
            <person name="Gill J.E."/>
            <person name="Feldblyum T.V."/>
            <person name="Preuss D."/>
            <person name="Lin X."/>
            <person name="Nierman W.C."/>
            <person name="Salzberg S.L."/>
            <person name="White O."/>
            <person name="Venter J.C."/>
            <person name="Fraser C.M."/>
            <person name="Kaneko T."/>
            <person name="Nakamura Y."/>
            <person name="Sato S."/>
            <person name="Kato T."/>
            <person name="Asamizu E."/>
            <person name="Sasamoto S."/>
            <person name="Kimura T."/>
            <person name="Idesawa K."/>
            <person name="Kawashima K."/>
            <person name="Kishida Y."/>
            <person name="Kiyokawa C."/>
            <person name="Kohara M."/>
            <person name="Matsumoto M."/>
            <person name="Matsuno A."/>
            <person name="Muraki A."/>
            <person name="Nakayama S."/>
            <person name="Nakazaki N."/>
            <person name="Shinpo S."/>
            <person name="Takeuchi C."/>
            <person name="Wada T."/>
            <person name="Watanabe A."/>
            <person name="Yamada M."/>
            <person name="Yasuda M."/>
            <person name="Tabata S."/>
        </authorList>
    </citation>
    <scope>NUCLEOTIDE SEQUENCE [LARGE SCALE GENOMIC DNA]</scope>
    <source>
        <strain>cv. Columbia</strain>
    </source>
</reference>
<reference key="3">
    <citation type="journal article" date="2017" name="Plant J.">
        <title>Araport11: a complete reannotation of the Arabidopsis thaliana reference genome.</title>
        <authorList>
            <person name="Cheng C.Y."/>
            <person name="Krishnakumar V."/>
            <person name="Chan A.P."/>
            <person name="Thibaud-Nissen F."/>
            <person name="Schobel S."/>
            <person name="Town C.D."/>
        </authorList>
    </citation>
    <scope>GENOME REANNOTATION</scope>
    <source>
        <strain>cv. Columbia</strain>
    </source>
</reference>
<reference key="4">
    <citation type="journal article" date="2006" name="Plant Biotechnol. J.">
        <title>Simultaneous high-throughput recombinational cloning of open reading frames in closed and open configurations.</title>
        <authorList>
            <person name="Underwood B.A."/>
            <person name="Vanderhaeghen R."/>
            <person name="Whitford R."/>
            <person name="Town C.D."/>
            <person name="Hilson P."/>
        </authorList>
    </citation>
    <scope>NUCLEOTIDE SEQUENCE [LARGE SCALE MRNA]</scope>
    <source>
        <strain>cv. Columbia</strain>
    </source>
</reference>
<reference key="5">
    <citation type="journal article" date="2003" name="Plant Physiol.">
        <title>The fasciclin-like arabinogalactan proteins of Arabidopsis. A multigene family of putative cell adhesion molecules.</title>
        <authorList>
            <person name="Johnson K.L."/>
            <person name="Jones B.J."/>
            <person name="Bacic A."/>
            <person name="Schultz C.J."/>
        </authorList>
    </citation>
    <scope>GENE FAMILY ORGANIZATION</scope>
    <scope>NOMENCLATURE</scope>
</reference>
<gene>
    <name type="primary">FLA14</name>
    <name type="ordered locus">At3g12660</name>
    <name type="ORF">MBK21.3</name>
    <name type="ORF">T2E22.3</name>
</gene>
<protein>
    <recommendedName>
        <fullName>Fasciclin-like arabinogalactan protein 14</fullName>
    </recommendedName>
</protein>
<proteinExistence type="evidence at transcript level"/>
<keyword id="KW-1003">Cell membrane</keyword>
<keyword id="KW-0325">Glycoprotein</keyword>
<keyword id="KW-0336">GPI-anchor</keyword>
<keyword id="KW-0449">Lipoprotein</keyword>
<keyword id="KW-0472">Membrane</keyword>
<keyword id="KW-0654">Proteoglycan</keyword>
<keyword id="KW-1185">Reference proteome</keyword>
<keyword id="KW-0732">Signal</keyword>
<evidence type="ECO:0000255" key="1"/>
<evidence type="ECO:0000255" key="2">
    <source>
        <dbReference type="PROSITE-ProRule" id="PRU00082"/>
    </source>
</evidence>
<evidence type="ECO:0000256" key="3">
    <source>
        <dbReference type="SAM" id="MobiDB-lite"/>
    </source>
</evidence>
<evidence type="ECO:0000305" key="4"/>
<comment type="function">
    <text>May be a cell surface adhesion protein.</text>
</comment>
<comment type="subcellular location">
    <subcellularLocation>
        <location evidence="4">Cell membrane</location>
        <topology evidence="4">Lipid-anchor</topology>
        <topology evidence="4">GPI-anchor</topology>
    </subcellularLocation>
</comment>
<comment type="similarity">
    <text evidence="4">Belongs to the fasciclin-like AGP family.</text>
</comment>
<sequence>MSSSLTIFFFFFASTFLYTSSNSFNITNILNEHDDFSNFNQLLSETQLASTINKRQTITVLVVSNGALSSLSGQPTSVIKKILSLHIVLDYYDQKKLKNLSKKTVLLTTLFQSSGLARGQQGFLNATVMKNGDVAFGSAVPGSSLDAQLQDTVAALPFNISVLHISSAIMIDVKGDNAPTASPLSPVSSPPRPAESPNDDGQDFDEPPSSAPGAAADEPSENAGSANGVSRNDSQPAFAFTLLMSFIWWFMARLR</sequence>